<gene>
    <name type="ORF">ORF3</name>
</gene>
<organism>
    <name type="scientific">Feline calicivirus (strain Cat/United States/Urbana/1960)</name>
    <name type="common">FCV</name>
    <dbReference type="NCBI Taxonomy" id="292349"/>
    <lineage>
        <taxon>Viruses</taxon>
        <taxon>Riboviria</taxon>
        <taxon>Orthornavirae</taxon>
        <taxon>Pisuviricota</taxon>
        <taxon>Pisoniviricetes</taxon>
        <taxon>Picornavirales</taxon>
        <taxon>Caliciviridae</taxon>
        <taxon>Vesivirus</taxon>
        <taxon>Feline calicivirus</taxon>
    </lineage>
</organism>
<evidence type="ECO:0000250" key="1">
    <source>
        <dbReference type="UniProtKB" id="P28711"/>
    </source>
</evidence>
<evidence type="ECO:0000305" key="2"/>
<sequence>MNSILGLIDTVTNTIGKAQQIELDKAALGQQRELALQRMNLDRQALNNQVEQFNKILEQRVQGPLQSVRLARAAGFRVDPYSYTNQNFYDDQLNAIRLSYRNLFKN</sequence>
<dbReference type="EMBL" id="L40021">
    <property type="protein sequence ID" value="AAA79325.1"/>
    <property type="molecule type" value="Genomic_RNA"/>
</dbReference>
<dbReference type="RefSeq" id="NP_783198.1">
    <property type="nucleotide sequence ID" value="NC_001481.2"/>
</dbReference>
<dbReference type="SMR" id="Q66916"/>
<dbReference type="KEGG" id="vg:1502253"/>
<dbReference type="Proteomes" id="UP000001098">
    <property type="component" value="Segment"/>
</dbReference>
<dbReference type="GO" id="GO:0030430">
    <property type="term" value="C:host cell cytoplasm"/>
    <property type="evidence" value="ECO:0007669"/>
    <property type="project" value="UniProtKB-SubCell"/>
</dbReference>
<dbReference type="GO" id="GO:0098021">
    <property type="term" value="C:viral capsid, decoration"/>
    <property type="evidence" value="ECO:0007669"/>
    <property type="project" value="UniProtKB-KW"/>
</dbReference>
<dbReference type="InterPro" id="IPR007996">
    <property type="entry name" value="Vesivirus_VP2"/>
</dbReference>
<dbReference type="Pfam" id="PF05332">
    <property type="entry name" value="Vesi_VP2"/>
    <property type="match status" value="1"/>
</dbReference>
<reference key="1">
    <citation type="journal article" date="1995" name="Virology">
        <title>RNA transcripts derived from a cloned full-length copy of the feline calicivirus genome do not require VpG for infectivity.</title>
        <authorList>
            <person name="Sosnovtsev S.V."/>
            <person name="Green K.Y."/>
        </authorList>
    </citation>
    <scope>NUCLEOTIDE SEQUENCE [GENOMIC RNA]</scope>
</reference>
<reference key="2">
    <citation type="journal article" date="2000" name="Virology">
        <title>Identification and genomic mapping of the ORF3 and VPg proteins in feline calicivirus virions.</title>
        <authorList>
            <person name="Sosnovtsev S.V."/>
            <person name="Green K.Y."/>
        </authorList>
    </citation>
    <scope>PROTEIN SEQUENCE OF 1-20 AND 102-106</scope>
    <scope>IDENTIFICATION</scope>
</reference>
<reference key="3">
    <citation type="journal article" date="2002" name="J. Virol.">
        <title>Isolation of enzymatically active replication complexes from feline calicivirus-infected cells.</title>
        <authorList>
            <person name="Green K.Y."/>
            <person name="Mory A."/>
            <person name="Fogg M.H."/>
            <person name="Weisberg A."/>
            <person name="Belliot G."/>
            <person name="Wagner M."/>
            <person name="Mitra T."/>
            <person name="Ehrenfeld E."/>
            <person name="Cameron C.E."/>
            <person name="Sosnovtsev S.V."/>
        </authorList>
    </citation>
    <scope>SUBCELLULAR LOCATION</scope>
</reference>
<reference key="4">
    <citation type="journal article" date="2005" name="J. Virol.">
        <title>Feline calicivirus VP2 is essential for the production of infectious virions.</title>
        <authorList>
            <person name="Sosnovtsev S.V."/>
            <person name="Belliot G."/>
            <person name="Chang K.O."/>
            <person name="Onwudiwe O."/>
            <person name="Green K.Y."/>
        </authorList>
    </citation>
    <scope>FUNCTION</scope>
</reference>
<reference key="5">
    <citation type="journal article" date="2006" name="J. Gen. Virol.">
        <title>Analysis of protein-protein interactions in the feline calicivirus replication complex.</title>
        <authorList>
            <person name="Kaiser W.J."/>
            <person name="Chaudhry Y."/>
            <person name="Sosnovtsev S.V."/>
            <person name="Goodfellow I.G."/>
        </authorList>
    </citation>
    <scope>INTERACTION WITH CAPSID PROTEIN</scope>
</reference>
<keyword id="KW-1232">Capsid decoration protein</keyword>
<keyword id="KW-0167">Capsid protein</keyword>
<keyword id="KW-0903">Direct protein sequencing</keyword>
<keyword id="KW-1035">Host cytoplasm</keyword>
<keyword id="KW-1185">Reference proteome</keyword>
<keyword id="KW-0946">Virion</keyword>
<name>VP2_FCVUR</name>
<organismHost>
    <name type="scientific">Felis catus</name>
    <name type="common">Cat</name>
    <name type="synonym">Felis silvestris catus</name>
    <dbReference type="NCBI Taxonomy" id="9685"/>
</organismHost>
<proteinExistence type="evidence at protein level"/>
<comment type="function">
    <text evidence="1">Minor structural protein that forms a portal-like structure at a unique three-fold axis of symmetry, following binding to the host receptor. The virion attaches to feline junctional adhesion molecule A (F11R). Once attached, the virion is endocytosed. Acidification of the endosome induces conformational change of capsid protein thereby injecting virus genomic RNA into host cytoplasm. The channel formed by VP2 may allow the delivery of the viral genome through the host endosomal membrane.</text>
</comment>
<comment type="subunit">
    <text evidence="1">Homooligomer. The portal-like structure consists in 12 copies of VP2. Interacts with capsid protein VP1.</text>
</comment>
<comment type="subcellular location">
    <subcellularLocation>
        <location evidence="1">Virion</location>
    </subcellularLocation>
    <subcellularLocation>
        <location evidence="2">Host cytoplasm</location>
    </subcellularLocation>
</comment>
<comment type="domain">
    <text evidence="1">The N-terminus domain points away from the virion surface.</text>
</comment>
<comment type="miscellaneous">
    <text evidence="1">Translated by a ribosomal termination-reinitiation process from the bicistronic mRNA coding for VP1 and VP2.</text>
</comment>
<comment type="similarity">
    <text evidence="2">Belongs to the vesivirus VP2 protein family.</text>
</comment>
<feature type="chain" id="PRO_0000100125" description="Minor capsid protein VP2">
    <location>
        <begin position="1"/>
        <end position="106"/>
    </location>
</feature>
<accession>Q66916</accession>
<protein>
    <recommendedName>
        <fullName>Minor capsid protein VP2</fullName>
    </recommendedName>
</protein>